<reference key="1">
    <citation type="submission" date="2007-06" db="EMBL/GenBank/DDBJ databases">
        <title>Complete sequence of Sinorhizobium medicae WSM419 chromosome.</title>
        <authorList>
            <consortium name="US DOE Joint Genome Institute"/>
            <person name="Copeland A."/>
            <person name="Lucas S."/>
            <person name="Lapidus A."/>
            <person name="Barry K."/>
            <person name="Glavina del Rio T."/>
            <person name="Dalin E."/>
            <person name="Tice H."/>
            <person name="Pitluck S."/>
            <person name="Chain P."/>
            <person name="Malfatti S."/>
            <person name="Shin M."/>
            <person name="Vergez L."/>
            <person name="Schmutz J."/>
            <person name="Larimer F."/>
            <person name="Land M."/>
            <person name="Hauser L."/>
            <person name="Kyrpides N."/>
            <person name="Mikhailova N."/>
            <person name="Reeve W.G."/>
            <person name="Richardson P."/>
        </authorList>
    </citation>
    <scope>NUCLEOTIDE SEQUENCE [LARGE SCALE GENOMIC DNA]</scope>
    <source>
        <strain>WSM419</strain>
    </source>
</reference>
<feature type="chain" id="PRO_1000063613" description="3-isopropylmalate dehydratase large subunit">
    <location>
        <begin position="1"/>
        <end position="469"/>
    </location>
</feature>
<feature type="binding site" evidence="1">
    <location>
        <position position="350"/>
    </location>
    <ligand>
        <name>[4Fe-4S] cluster</name>
        <dbReference type="ChEBI" id="CHEBI:49883"/>
    </ligand>
</feature>
<feature type="binding site" evidence="1">
    <location>
        <position position="410"/>
    </location>
    <ligand>
        <name>[4Fe-4S] cluster</name>
        <dbReference type="ChEBI" id="CHEBI:49883"/>
    </ligand>
</feature>
<feature type="binding site" evidence="1">
    <location>
        <position position="413"/>
    </location>
    <ligand>
        <name>[4Fe-4S] cluster</name>
        <dbReference type="ChEBI" id="CHEBI:49883"/>
    </ligand>
</feature>
<name>LEUC_SINMW</name>
<sequence length="469" mass="50932">MSAPRTLYDKIWDDHLVDSQADGTCLLYIDRHLVHEVTSPQAFEGLRIAGRKVRAPEKTLAVVDHNVPTSPDRHLGIKNEESRIQVEALARNAADFGVEYYSESDKRQGIVHIVGPEQGFTLPGMTIVCGDSHTSTHGAFGALAHGIGTSEVEHVLATQTLIQKKAKNMLVRVDGQLPPGVTAKDIILAIIGEIGTAGGTGHVIEFAGEAIRSLSMEGRMTVCNMTIEGGARAGLIAPDETTFAYIEDRPRAPKGEAWDMAVEYWKTLHTDEGAHYDRVVVLDAANLPPIVSWGSSPEDVVSVQGVVPNPDEIPDETKRTSKWRALDYMGLKPGTRITDIAIDRVFIGSCTNGRIEDLRAVAKVVEGRKVAPTVSAMIVPGSGLVKEQAEVEGLDKIFREAGFDWREPGCSMCLAMNDDRLKPGERCASTSNRNFEGRQGFKGRTHLLSPAMAAAAAIAGHFVDIREWK</sequence>
<dbReference type="EC" id="4.2.1.33" evidence="1"/>
<dbReference type="EMBL" id="CP000738">
    <property type="protein sequence ID" value="ABR61885.1"/>
    <property type="molecule type" value="Genomic_DNA"/>
</dbReference>
<dbReference type="RefSeq" id="WP_012067266.1">
    <property type="nucleotide sequence ID" value="NC_009636.1"/>
</dbReference>
<dbReference type="RefSeq" id="YP_001328720.1">
    <property type="nucleotide sequence ID" value="NC_009636.1"/>
</dbReference>
<dbReference type="SMR" id="A6UE05"/>
<dbReference type="STRING" id="366394.Smed_3059"/>
<dbReference type="GeneID" id="61610645"/>
<dbReference type="KEGG" id="smd:Smed_3059"/>
<dbReference type="PATRIC" id="fig|366394.8.peg.6288"/>
<dbReference type="eggNOG" id="COG0065">
    <property type="taxonomic scope" value="Bacteria"/>
</dbReference>
<dbReference type="HOGENOM" id="CLU_006714_3_4_5"/>
<dbReference type="OrthoDB" id="9802769at2"/>
<dbReference type="UniPathway" id="UPA00048">
    <property type="reaction ID" value="UER00071"/>
</dbReference>
<dbReference type="Proteomes" id="UP000001108">
    <property type="component" value="Chromosome"/>
</dbReference>
<dbReference type="GO" id="GO:0003861">
    <property type="term" value="F:3-isopropylmalate dehydratase activity"/>
    <property type="evidence" value="ECO:0007669"/>
    <property type="project" value="UniProtKB-UniRule"/>
</dbReference>
<dbReference type="GO" id="GO:0051539">
    <property type="term" value="F:4 iron, 4 sulfur cluster binding"/>
    <property type="evidence" value="ECO:0007669"/>
    <property type="project" value="UniProtKB-KW"/>
</dbReference>
<dbReference type="GO" id="GO:0046872">
    <property type="term" value="F:metal ion binding"/>
    <property type="evidence" value="ECO:0007669"/>
    <property type="project" value="UniProtKB-KW"/>
</dbReference>
<dbReference type="GO" id="GO:0009098">
    <property type="term" value="P:L-leucine biosynthetic process"/>
    <property type="evidence" value="ECO:0007669"/>
    <property type="project" value="UniProtKB-UniRule"/>
</dbReference>
<dbReference type="CDD" id="cd01583">
    <property type="entry name" value="IPMI"/>
    <property type="match status" value="1"/>
</dbReference>
<dbReference type="FunFam" id="3.30.499.10:FF:000006">
    <property type="entry name" value="3-isopropylmalate dehydratase large subunit"/>
    <property type="match status" value="1"/>
</dbReference>
<dbReference type="FunFam" id="3.30.499.10:FF:000007">
    <property type="entry name" value="3-isopropylmalate dehydratase large subunit"/>
    <property type="match status" value="1"/>
</dbReference>
<dbReference type="Gene3D" id="3.30.499.10">
    <property type="entry name" value="Aconitase, domain 3"/>
    <property type="match status" value="2"/>
</dbReference>
<dbReference type="HAMAP" id="MF_01026">
    <property type="entry name" value="LeuC_type1"/>
    <property type="match status" value="1"/>
</dbReference>
<dbReference type="InterPro" id="IPR004430">
    <property type="entry name" value="3-IsopropMal_deHydase_lsu"/>
</dbReference>
<dbReference type="InterPro" id="IPR015931">
    <property type="entry name" value="Acnase/IPM_dHydase_lsu_aba_1/3"/>
</dbReference>
<dbReference type="InterPro" id="IPR001030">
    <property type="entry name" value="Acoase/IPM_deHydtase_lsu_aba"/>
</dbReference>
<dbReference type="InterPro" id="IPR018136">
    <property type="entry name" value="Aconitase_4Fe-4S_BS"/>
</dbReference>
<dbReference type="InterPro" id="IPR036008">
    <property type="entry name" value="Aconitase_4Fe-4S_dom"/>
</dbReference>
<dbReference type="InterPro" id="IPR050067">
    <property type="entry name" value="IPM_dehydratase_rel_enz"/>
</dbReference>
<dbReference type="InterPro" id="IPR033941">
    <property type="entry name" value="IPMI_cat"/>
</dbReference>
<dbReference type="NCBIfam" id="TIGR00170">
    <property type="entry name" value="leuC"/>
    <property type="match status" value="1"/>
</dbReference>
<dbReference type="NCBIfam" id="NF004016">
    <property type="entry name" value="PRK05478.1"/>
    <property type="match status" value="1"/>
</dbReference>
<dbReference type="NCBIfam" id="NF009116">
    <property type="entry name" value="PRK12466.1"/>
    <property type="match status" value="1"/>
</dbReference>
<dbReference type="PANTHER" id="PTHR43822:SF9">
    <property type="entry name" value="3-ISOPROPYLMALATE DEHYDRATASE"/>
    <property type="match status" value="1"/>
</dbReference>
<dbReference type="PANTHER" id="PTHR43822">
    <property type="entry name" value="HOMOACONITASE, MITOCHONDRIAL-RELATED"/>
    <property type="match status" value="1"/>
</dbReference>
<dbReference type="Pfam" id="PF00330">
    <property type="entry name" value="Aconitase"/>
    <property type="match status" value="1"/>
</dbReference>
<dbReference type="PRINTS" id="PR00415">
    <property type="entry name" value="ACONITASE"/>
</dbReference>
<dbReference type="SUPFAM" id="SSF53732">
    <property type="entry name" value="Aconitase iron-sulfur domain"/>
    <property type="match status" value="1"/>
</dbReference>
<dbReference type="PROSITE" id="PS00450">
    <property type="entry name" value="ACONITASE_1"/>
    <property type="match status" value="1"/>
</dbReference>
<dbReference type="PROSITE" id="PS01244">
    <property type="entry name" value="ACONITASE_2"/>
    <property type="match status" value="1"/>
</dbReference>
<protein>
    <recommendedName>
        <fullName evidence="1">3-isopropylmalate dehydratase large subunit</fullName>
        <ecNumber evidence="1">4.2.1.33</ecNumber>
    </recommendedName>
    <alternativeName>
        <fullName evidence="1">Alpha-IPM isomerase</fullName>
        <shortName evidence="1">IPMI</shortName>
    </alternativeName>
    <alternativeName>
        <fullName evidence="1">Isopropylmalate isomerase</fullName>
    </alternativeName>
</protein>
<keyword id="KW-0004">4Fe-4S</keyword>
<keyword id="KW-0028">Amino-acid biosynthesis</keyword>
<keyword id="KW-0100">Branched-chain amino acid biosynthesis</keyword>
<keyword id="KW-0408">Iron</keyword>
<keyword id="KW-0411">Iron-sulfur</keyword>
<keyword id="KW-0432">Leucine biosynthesis</keyword>
<keyword id="KW-0456">Lyase</keyword>
<keyword id="KW-0479">Metal-binding</keyword>
<comment type="function">
    <text evidence="1">Catalyzes the isomerization between 2-isopropylmalate and 3-isopropylmalate, via the formation of 2-isopropylmaleate.</text>
</comment>
<comment type="catalytic activity">
    <reaction evidence="1">
        <text>(2R,3S)-3-isopropylmalate = (2S)-2-isopropylmalate</text>
        <dbReference type="Rhea" id="RHEA:32287"/>
        <dbReference type="ChEBI" id="CHEBI:1178"/>
        <dbReference type="ChEBI" id="CHEBI:35121"/>
        <dbReference type="EC" id="4.2.1.33"/>
    </reaction>
</comment>
<comment type="cofactor">
    <cofactor evidence="1">
        <name>[4Fe-4S] cluster</name>
        <dbReference type="ChEBI" id="CHEBI:49883"/>
    </cofactor>
    <text evidence="1">Binds 1 [4Fe-4S] cluster per subunit.</text>
</comment>
<comment type="pathway">
    <text evidence="1">Amino-acid biosynthesis; L-leucine biosynthesis; L-leucine from 3-methyl-2-oxobutanoate: step 2/4.</text>
</comment>
<comment type="subunit">
    <text evidence="1">Heterodimer of LeuC and LeuD.</text>
</comment>
<comment type="similarity">
    <text evidence="1">Belongs to the aconitase/IPM isomerase family. LeuC type 1 subfamily.</text>
</comment>
<organism>
    <name type="scientific">Sinorhizobium medicae (strain WSM419)</name>
    <name type="common">Ensifer medicae</name>
    <dbReference type="NCBI Taxonomy" id="366394"/>
    <lineage>
        <taxon>Bacteria</taxon>
        <taxon>Pseudomonadati</taxon>
        <taxon>Pseudomonadota</taxon>
        <taxon>Alphaproteobacteria</taxon>
        <taxon>Hyphomicrobiales</taxon>
        <taxon>Rhizobiaceae</taxon>
        <taxon>Sinorhizobium/Ensifer group</taxon>
        <taxon>Sinorhizobium</taxon>
    </lineage>
</organism>
<evidence type="ECO:0000255" key="1">
    <source>
        <dbReference type="HAMAP-Rule" id="MF_01026"/>
    </source>
</evidence>
<accession>A6UE05</accession>
<gene>
    <name evidence="1" type="primary">leuC</name>
    <name type="ordered locus">Smed_3059</name>
</gene>
<proteinExistence type="inferred from homology"/>